<dbReference type="EMBL" id="CP001175">
    <property type="protein sequence ID" value="ACK39520.1"/>
    <property type="molecule type" value="Genomic_DNA"/>
</dbReference>
<dbReference type="RefSeq" id="WP_012581343.1">
    <property type="nucleotide sequence ID" value="NC_011660.1"/>
</dbReference>
<dbReference type="SMR" id="B8DFT0"/>
<dbReference type="KEGG" id="lmh:LMHCC_1172"/>
<dbReference type="HOGENOM" id="CLU_030805_9_3_9"/>
<dbReference type="CDD" id="cd00885">
    <property type="entry name" value="cinA"/>
    <property type="match status" value="1"/>
</dbReference>
<dbReference type="Gene3D" id="3.90.950.20">
    <property type="entry name" value="CinA-like"/>
    <property type="match status" value="1"/>
</dbReference>
<dbReference type="Gene3D" id="3.40.980.10">
    <property type="entry name" value="MoaB/Mog-like domain"/>
    <property type="match status" value="1"/>
</dbReference>
<dbReference type="HAMAP" id="MF_00226_B">
    <property type="entry name" value="CinA_B"/>
    <property type="match status" value="1"/>
</dbReference>
<dbReference type="InterPro" id="IPR050101">
    <property type="entry name" value="CinA"/>
</dbReference>
<dbReference type="InterPro" id="IPR036653">
    <property type="entry name" value="CinA-like_C"/>
</dbReference>
<dbReference type="InterPro" id="IPR008136">
    <property type="entry name" value="CinA_C"/>
</dbReference>
<dbReference type="InterPro" id="IPR041424">
    <property type="entry name" value="CinA_KH"/>
</dbReference>
<dbReference type="InterPro" id="IPR008135">
    <property type="entry name" value="Competence-induced_CinA"/>
</dbReference>
<dbReference type="InterPro" id="IPR036425">
    <property type="entry name" value="MoaB/Mog-like_dom_sf"/>
</dbReference>
<dbReference type="InterPro" id="IPR001453">
    <property type="entry name" value="MoaB/Mog_dom"/>
</dbReference>
<dbReference type="NCBIfam" id="TIGR00200">
    <property type="entry name" value="cinA_nterm"/>
    <property type="match status" value="1"/>
</dbReference>
<dbReference type="NCBIfam" id="TIGR00177">
    <property type="entry name" value="molyb_syn"/>
    <property type="match status" value="1"/>
</dbReference>
<dbReference type="NCBIfam" id="TIGR00199">
    <property type="entry name" value="PncC_domain"/>
    <property type="match status" value="1"/>
</dbReference>
<dbReference type="NCBIfam" id="NF001813">
    <property type="entry name" value="PRK00549.1"/>
    <property type="match status" value="1"/>
</dbReference>
<dbReference type="PANTHER" id="PTHR13939">
    <property type="entry name" value="NICOTINAMIDE-NUCLEOTIDE AMIDOHYDROLASE PNCC"/>
    <property type="match status" value="1"/>
</dbReference>
<dbReference type="PANTHER" id="PTHR13939:SF0">
    <property type="entry name" value="NMN AMIDOHYDROLASE-LIKE PROTEIN YFAY"/>
    <property type="match status" value="1"/>
</dbReference>
<dbReference type="Pfam" id="PF02464">
    <property type="entry name" value="CinA"/>
    <property type="match status" value="1"/>
</dbReference>
<dbReference type="Pfam" id="PF18146">
    <property type="entry name" value="CinA_KH"/>
    <property type="match status" value="1"/>
</dbReference>
<dbReference type="Pfam" id="PF00994">
    <property type="entry name" value="MoCF_biosynth"/>
    <property type="match status" value="1"/>
</dbReference>
<dbReference type="PIRSF" id="PIRSF006728">
    <property type="entry name" value="CinA"/>
    <property type="match status" value="1"/>
</dbReference>
<dbReference type="SMART" id="SM00852">
    <property type="entry name" value="MoCF_biosynth"/>
    <property type="match status" value="1"/>
</dbReference>
<dbReference type="SUPFAM" id="SSF142433">
    <property type="entry name" value="CinA-like"/>
    <property type="match status" value="1"/>
</dbReference>
<dbReference type="SUPFAM" id="SSF53218">
    <property type="entry name" value="Molybdenum cofactor biosynthesis proteins"/>
    <property type="match status" value="1"/>
</dbReference>
<comment type="similarity">
    <text evidence="1">Belongs to the CinA family.</text>
</comment>
<sequence length="414" mass="45620">MASAEIIAVGTELLLGQIVNSNAAFISQELAADGIYVYHHTVVGDNPARLKEVIEIAENRSDILIFTGGLGPTEDDITKQILAAHLQKQLVEDEYHMNKINEYFTSRNRAMTENNKLQAVIIEDSIVLNNDFGFAAGMYLRENNHTYVLLPGPPSEMKPMFTSYANPLLLSESGDQNILESKIMRFFGIGESQLAADLNDLIVTQVNPTIATYAGDNEVVVRITATAKTKEEASRLVKDTEEEILRRDGTFLYGYGEVSLSELVTAMLLEKELTISAAESFTAGLFQAEIARFPGISKIFKGGMVTYSEETKQSILQVSPQVIKEKGVVSAECAKEMAENVSRLCKTDIGISFTGVAGPDSLEGHPAGTIWIGLSVKGYETEAFQFVYGRDRNHNRRRAVKQGFQLIKQFLDAN</sequence>
<proteinExistence type="inferred from homology"/>
<organism>
    <name type="scientific">Listeria monocytogenes serotype 4a (strain HCC23)</name>
    <dbReference type="NCBI Taxonomy" id="552536"/>
    <lineage>
        <taxon>Bacteria</taxon>
        <taxon>Bacillati</taxon>
        <taxon>Bacillota</taxon>
        <taxon>Bacilli</taxon>
        <taxon>Bacillales</taxon>
        <taxon>Listeriaceae</taxon>
        <taxon>Listeria</taxon>
    </lineage>
</organism>
<feature type="chain" id="PRO_1000124986" description="Putative competence-damage inducible protein">
    <location>
        <begin position="1"/>
        <end position="414"/>
    </location>
</feature>
<accession>B8DFT0</accession>
<gene>
    <name evidence="1" type="primary">cinA</name>
    <name type="ordered locus">LMHCC_1172</name>
</gene>
<evidence type="ECO:0000255" key="1">
    <source>
        <dbReference type="HAMAP-Rule" id="MF_00226"/>
    </source>
</evidence>
<protein>
    <recommendedName>
        <fullName evidence="1">Putative competence-damage inducible protein</fullName>
    </recommendedName>
</protein>
<name>CINA_LISMH</name>
<reference key="1">
    <citation type="journal article" date="2011" name="J. Bacteriol.">
        <title>Genome sequence of lineage III Listeria monocytogenes strain HCC23.</title>
        <authorList>
            <person name="Steele C.L."/>
            <person name="Donaldson J.R."/>
            <person name="Paul D."/>
            <person name="Banes M.M."/>
            <person name="Arick T."/>
            <person name="Bridges S.M."/>
            <person name="Lawrence M.L."/>
        </authorList>
    </citation>
    <scope>NUCLEOTIDE SEQUENCE [LARGE SCALE GENOMIC DNA]</scope>
    <source>
        <strain>HCC23</strain>
    </source>
</reference>